<name>XGPT_CHESB</name>
<organism>
    <name type="scientific">Chelativorans sp. (strain BNC1)</name>
    <dbReference type="NCBI Taxonomy" id="266779"/>
    <lineage>
        <taxon>Bacteria</taxon>
        <taxon>Pseudomonadati</taxon>
        <taxon>Pseudomonadota</taxon>
        <taxon>Alphaproteobacteria</taxon>
        <taxon>Hyphomicrobiales</taxon>
        <taxon>Phyllobacteriaceae</taxon>
        <taxon>Chelativorans</taxon>
    </lineage>
</organism>
<reference key="1">
    <citation type="submission" date="2006-06" db="EMBL/GenBank/DDBJ databases">
        <title>Complete sequence of chromosome of Mesorhizobium sp. BNC1.</title>
        <authorList>
            <consortium name="US DOE Joint Genome Institute"/>
            <person name="Copeland A."/>
            <person name="Lucas S."/>
            <person name="Lapidus A."/>
            <person name="Barry K."/>
            <person name="Detter J.C."/>
            <person name="Glavina del Rio T."/>
            <person name="Hammon N."/>
            <person name="Israni S."/>
            <person name="Dalin E."/>
            <person name="Tice H."/>
            <person name="Pitluck S."/>
            <person name="Chertkov O."/>
            <person name="Brettin T."/>
            <person name="Bruce D."/>
            <person name="Han C."/>
            <person name="Tapia R."/>
            <person name="Gilna P."/>
            <person name="Schmutz J."/>
            <person name="Larimer F."/>
            <person name="Land M."/>
            <person name="Hauser L."/>
            <person name="Kyrpides N."/>
            <person name="Mikhailova N."/>
            <person name="Richardson P."/>
        </authorList>
    </citation>
    <scope>NUCLEOTIDE SEQUENCE [LARGE SCALE GENOMIC DNA]</scope>
    <source>
        <strain>BNC1</strain>
    </source>
</reference>
<proteinExistence type="inferred from homology"/>
<accession>Q11IP4</accession>
<keyword id="KW-0997">Cell inner membrane</keyword>
<keyword id="KW-1003">Cell membrane</keyword>
<keyword id="KW-0328">Glycosyltransferase</keyword>
<keyword id="KW-0460">Magnesium</keyword>
<keyword id="KW-0472">Membrane</keyword>
<keyword id="KW-0479">Metal-binding</keyword>
<keyword id="KW-0660">Purine salvage</keyword>
<keyword id="KW-0808">Transferase</keyword>
<gene>
    <name evidence="1" type="primary">gpt</name>
    <name type="ordered locus">Meso_1335</name>
</gene>
<evidence type="ECO:0000255" key="1">
    <source>
        <dbReference type="HAMAP-Rule" id="MF_01903"/>
    </source>
</evidence>
<protein>
    <recommendedName>
        <fullName evidence="1">Xanthine-guanine phosphoribosyltransferase</fullName>
        <shortName evidence="1">XGPRT</shortName>
        <ecNumber evidence="1">2.4.2.-</ecNumber>
        <ecNumber evidence="1">2.4.2.22</ecNumber>
    </recommendedName>
    <alternativeName>
        <fullName evidence="1">Xanthine phosphoribosyltransferase</fullName>
    </alternativeName>
</protein>
<dbReference type="EC" id="2.4.2.-" evidence="1"/>
<dbReference type="EC" id="2.4.2.22" evidence="1"/>
<dbReference type="EMBL" id="CP000390">
    <property type="protein sequence ID" value="ABG62731.1"/>
    <property type="molecule type" value="Genomic_DNA"/>
</dbReference>
<dbReference type="SMR" id="Q11IP4"/>
<dbReference type="STRING" id="266779.Meso_1335"/>
<dbReference type="KEGG" id="mes:Meso_1335"/>
<dbReference type="eggNOG" id="COG2236">
    <property type="taxonomic scope" value="Bacteria"/>
</dbReference>
<dbReference type="HOGENOM" id="CLU_080904_3_0_5"/>
<dbReference type="OrthoDB" id="9789690at2"/>
<dbReference type="UniPathway" id="UPA00602">
    <property type="reaction ID" value="UER00658"/>
</dbReference>
<dbReference type="UniPathway" id="UPA00909">
    <property type="reaction ID" value="UER00887"/>
</dbReference>
<dbReference type="GO" id="GO:0005886">
    <property type="term" value="C:plasma membrane"/>
    <property type="evidence" value="ECO:0007669"/>
    <property type="project" value="UniProtKB-SubCell"/>
</dbReference>
<dbReference type="GO" id="GO:0052657">
    <property type="term" value="F:guanine phosphoribosyltransferase activity"/>
    <property type="evidence" value="ECO:0007669"/>
    <property type="project" value="RHEA"/>
</dbReference>
<dbReference type="GO" id="GO:0004422">
    <property type="term" value="F:hypoxanthine phosphoribosyltransferase activity"/>
    <property type="evidence" value="ECO:0007669"/>
    <property type="project" value="RHEA"/>
</dbReference>
<dbReference type="GO" id="GO:0000287">
    <property type="term" value="F:magnesium ion binding"/>
    <property type="evidence" value="ECO:0007669"/>
    <property type="project" value="UniProtKB-UniRule"/>
</dbReference>
<dbReference type="GO" id="GO:0000310">
    <property type="term" value="F:xanthine phosphoribosyltransferase activity"/>
    <property type="evidence" value="ECO:0007669"/>
    <property type="project" value="UniProtKB-UniRule"/>
</dbReference>
<dbReference type="GO" id="GO:0032263">
    <property type="term" value="P:GMP salvage"/>
    <property type="evidence" value="ECO:0007669"/>
    <property type="project" value="UniProtKB-UniRule"/>
</dbReference>
<dbReference type="GO" id="GO:0006166">
    <property type="term" value="P:purine ribonucleoside salvage"/>
    <property type="evidence" value="ECO:0007669"/>
    <property type="project" value="UniProtKB-KW"/>
</dbReference>
<dbReference type="GO" id="GO:0032265">
    <property type="term" value="P:XMP salvage"/>
    <property type="evidence" value="ECO:0007669"/>
    <property type="project" value="UniProtKB-UniRule"/>
</dbReference>
<dbReference type="CDD" id="cd06223">
    <property type="entry name" value="PRTases_typeI"/>
    <property type="match status" value="1"/>
</dbReference>
<dbReference type="Gene3D" id="3.40.50.2020">
    <property type="match status" value="1"/>
</dbReference>
<dbReference type="HAMAP" id="MF_01903">
    <property type="entry name" value="XGPRT"/>
    <property type="match status" value="1"/>
</dbReference>
<dbReference type="InterPro" id="IPR000836">
    <property type="entry name" value="PRibTrfase_dom"/>
</dbReference>
<dbReference type="InterPro" id="IPR029057">
    <property type="entry name" value="PRTase-like"/>
</dbReference>
<dbReference type="InterPro" id="IPR023747">
    <property type="entry name" value="Xanthine_Guanine_PRibTrfase"/>
</dbReference>
<dbReference type="NCBIfam" id="NF006613">
    <property type="entry name" value="PRK09177.1"/>
    <property type="match status" value="1"/>
</dbReference>
<dbReference type="PANTHER" id="PTHR39563">
    <property type="entry name" value="XANTHINE PHOSPHORIBOSYLTRANSFERASE"/>
    <property type="match status" value="1"/>
</dbReference>
<dbReference type="PANTHER" id="PTHR39563:SF1">
    <property type="entry name" value="XANTHINE-GUANINE PHOSPHORIBOSYLTRANSFERASE"/>
    <property type="match status" value="1"/>
</dbReference>
<dbReference type="Pfam" id="PF00156">
    <property type="entry name" value="Pribosyltran"/>
    <property type="match status" value="1"/>
</dbReference>
<dbReference type="SUPFAM" id="SSF53271">
    <property type="entry name" value="PRTase-like"/>
    <property type="match status" value="1"/>
</dbReference>
<feature type="chain" id="PRO_0000261010" description="Xanthine-guanine phosphoribosyltransferase">
    <location>
        <begin position="1"/>
        <end position="165"/>
    </location>
</feature>
<feature type="binding site" evidence="1">
    <location>
        <begin position="41"/>
        <end position="42"/>
    </location>
    <ligand>
        <name>5-phospho-alpha-D-ribose 1-diphosphate</name>
        <dbReference type="ChEBI" id="CHEBI:58017"/>
    </ligand>
</feature>
<feature type="binding site" evidence="1">
    <location>
        <begin position="98"/>
        <end position="106"/>
    </location>
    <ligand>
        <name>5-phospho-alpha-D-ribose 1-diphosphate</name>
        <dbReference type="ChEBI" id="CHEBI:58017"/>
    </ligand>
</feature>
<feature type="binding site" evidence="1">
    <location>
        <position position="99"/>
    </location>
    <ligand>
        <name>Mg(2+)</name>
        <dbReference type="ChEBI" id="CHEBI:18420"/>
    </ligand>
</feature>
<feature type="binding site" evidence="1">
    <location>
        <begin position="102"/>
        <end position="106"/>
    </location>
    <ligand>
        <name>GMP</name>
        <dbReference type="ChEBI" id="CHEBI:58115"/>
    </ligand>
</feature>
<feature type="binding site" evidence="1">
    <location>
        <position position="102"/>
    </location>
    <ligand>
        <name>guanine</name>
        <dbReference type="ChEBI" id="CHEBI:16235"/>
    </ligand>
</feature>
<feature type="binding site" evidence="1">
    <location>
        <position position="102"/>
    </location>
    <ligand>
        <name>xanthine</name>
        <dbReference type="ChEBI" id="CHEBI:17712"/>
    </ligand>
</feature>
<feature type="binding site" evidence="1">
    <location>
        <begin position="144"/>
        <end position="145"/>
    </location>
    <ligand>
        <name>GMP</name>
        <dbReference type="ChEBI" id="CHEBI:58115"/>
    </ligand>
</feature>
<feature type="binding site" evidence="1">
    <location>
        <position position="145"/>
    </location>
    <ligand>
        <name>guanine</name>
        <dbReference type="ChEBI" id="CHEBI:16235"/>
    </ligand>
</feature>
<feature type="binding site" evidence="1">
    <location>
        <position position="145"/>
    </location>
    <ligand>
        <name>xanthine</name>
        <dbReference type="ChEBI" id="CHEBI:17712"/>
    </ligand>
</feature>
<comment type="function">
    <text evidence="1">Purine salvage pathway enzyme that catalyzes the transfer of the ribosyl-5-phosphate group from 5-phospho-alpha-D-ribose 1-diphosphate (PRPP) to the N9 position of the 6-oxopurines guanine and xanthine to form the corresponding ribonucleotides GMP (guanosine 5'-monophosphate) and XMP (xanthosine 5'-monophosphate), with the release of PPi. To a lesser extent, also acts on hypoxanthine.</text>
</comment>
<comment type="catalytic activity">
    <reaction evidence="1">
        <text>GMP + diphosphate = guanine + 5-phospho-alpha-D-ribose 1-diphosphate</text>
        <dbReference type="Rhea" id="RHEA:25424"/>
        <dbReference type="ChEBI" id="CHEBI:16235"/>
        <dbReference type="ChEBI" id="CHEBI:33019"/>
        <dbReference type="ChEBI" id="CHEBI:58017"/>
        <dbReference type="ChEBI" id="CHEBI:58115"/>
    </reaction>
    <physiologicalReaction direction="right-to-left" evidence="1">
        <dbReference type="Rhea" id="RHEA:25426"/>
    </physiologicalReaction>
</comment>
<comment type="catalytic activity">
    <reaction evidence="1">
        <text>XMP + diphosphate = xanthine + 5-phospho-alpha-D-ribose 1-diphosphate</text>
        <dbReference type="Rhea" id="RHEA:10800"/>
        <dbReference type="ChEBI" id="CHEBI:17712"/>
        <dbReference type="ChEBI" id="CHEBI:33019"/>
        <dbReference type="ChEBI" id="CHEBI:57464"/>
        <dbReference type="ChEBI" id="CHEBI:58017"/>
        <dbReference type="EC" id="2.4.2.22"/>
    </reaction>
    <physiologicalReaction direction="right-to-left" evidence="1">
        <dbReference type="Rhea" id="RHEA:10802"/>
    </physiologicalReaction>
</comment>
<comment type="catalytic activity">
    <reaction evidence="1">
        <text>IMP + diphosphate = hypoxanthine + 5-phospho-alpha-D-ribose 1-diphosphate</text>
        <dbReference type="Rhea" id="RHEA:17973"/>
        <dbReference type="ChEBI" id="CHEBI:17368"/>
        <dbReference type="ChEBI" id="CHEBI:33019"/>
        <dbReference type="ChEBI" id="CHEBI:58017"/>
        <dbReference type="ChEBI" id="CHEBI:58053"/>
    </reaction>
    <physiologicalReaction direction="right-to-left" evidence="1">
        <dbReference type="Rhea" id="RHEA:17975"/>
    </physiologicalReaction>
</comment>
<comment type="cofactor">
    <cofactor evidence="1">
        <name>Mg(2+)</name>
        <dbReference type="ChEBI" id="CHEBI:18420"/>
    </cofactor>
</comment>
<comment type="pathway">
    <text evidence="1">Purine metabolism; GMP biosynthesis via salvage pathway; GMP from guanine: step 1/1.</text>
</comment>
<comment type="pathway">
    <text evidence="1">Purine metabolism; XMP biosynthesis via salvage pathway; XMP from xanthine: step 1/1.</text>
</comment>
<comment type="subunit">
    <text evidence="1">Homotetramer.</text>
</comment>
<comment type="subcellular location">
    <subcellularLocation>
        <location evidence="1">Cell inner membrane</location>
        <topology evidence="1">Peripheral membrane protein</topology>
    </subcellularLocation>
</comment>
<comment type="similarity">
    <text evidence="1">Belongs to the purine/pyrimidine phosphoribosyltransferase family. XGPT subfamily.</text>
</comment>
<sequence length="165" mass="18364">MSLPEKAFPVSWDQFHRDARALAWRLAGTNGRWQAIVCITRGGLVPAAVIARELGIRLIETVCIASYHDYSEQGELKVLKEISPSLLEEDGQNILIVDDLTDTGKTAAIVRAMMPKAHFATVYAKPKGRPLVDTFVTEVSQDTWIYFPWDLGFSYQKPIADGEIG</sequence>